<name>SINA5_ARATH</name>
<keyword id="KW-0025">Alternative splicing</keyword>
<keyword id="KW-0963">Cytoplasm</keyword>
<keyword id="KW-0479">Metal-binding</keyword>
<keyword id="KW-0539">Nucleus</keyword>
<keyword id="KW-1185">Reference proteome</keyword>
<keyword id="KW-0808">Transferase</keyword>
<keyword id="KW-0833">Ubl conjugation pathway</keyword>
<keyword id="KW-0862">Zinc</keyword>
<keyword id="KW-0863">Zinc-finger</keyword>
<evidence type="ECO:0000250" key="1"/>
<evidence type="ECO:0000250" key="2">
    <source>
        <dbReference type="UniProtKB" id="Q8IUQ4"/>
    </source>
</evidence>
<evidence type="ECO:0000255" key="3">
    <source>
        <dbReference type="PROSITE-ProRule" id="PRU00175"/>
    </source>
</evidence>
<evidence type="ECO:0000255" key="4">
    <source>
        <dbReference type="PROSITE-ProRule" id="PRU00455"/>
    </source>
</evidence>
<evidence type="ECO:0000269" key="5">
    <source>
    </source>
</evidence>
<evidence type="ECO:0000269" key="6">
    <source>
    </source>
</evidence>
<evidence type="ECO:0000269" key="7">
    <source>
    </source>
</evidence>
<evidence type="ECO:0000269" key="8">
    <source>
    </source>
</evidence>
<evidence type="ECO:0000269" key="9">
    <source>
    </source>
</evidence>
<evidence type="ECO:0000303" key="10">
    <source>
    </source>
</evidence>
<evidence type="ECO:0000303" key="11">
    <source>
    </source>
</evidence>
<evidence type="ECO:0000303" key="12">
    <source>
    </source>
</evidence>
<evidence type="ECO:0000305" key="13"/>
<proteinExistence type="evidence at protein level"/>
<accession>Q8S3N1</accession>
<accession>Q8GYS3</accession>
<accession>Q9FK06</accession>
<organism>
    <name type="scientific">Arabidopsis thaliana</name>
    <name type="common">Mouse-ear cress</name>
    <dbReference type="NCBI Taxonomy" id="3702"/>
    <lineage>
        <taxon>Eukaryota</taxon>
        <taxon>Viridiplantae</taxon>
        <taxon>Streptophyta</taxon>
        <taxon>Embryophyta</taxon>
        <taxon>Tracheophyta</taxon>
        <taxon>Spermatophyta</taxon>
        <taxon>Magnoliopsida</taxon>
        <taxon>eudicotyledons</taxon>
        <taxon>Gunneridae</taxon>
        <taxon>Pentapetalae</taxon>
        <taxon>rosids</taxon>
        <taxon>malvids</taxon>
        <taxon>Brassicales</taxon>
        <taxon>Brassicaceae</taxon>
        <taxon>Camelineae</taxon>
        <taxon>Arabidopsis</taxon>
    </lineage>
</organism>
<feature type="chain" id="PRO_0000056184" description="E3 ubiquitin-protein ligase SINAT5">
    <location>
        <begin position="1"/>
        <end position="309"/>
    </location>
</feature>
<feature type="zinc finger region" description="RING-type" evidence="3">
    <location>
        <begin position="46"/>
        <end position="82"/>
    </location>
</feature>
<feature type="zinc finger region" description="SIAH-type" evidence="4">
    <location>
        <begin position="99"/>
        <end position="159"/>
    </location>
</feature>
<feature type="region of interest" description="SBD">
    <location>
        <begin position="96"/>
        <end position="289"/>
    </location>
</feature>
<feature type="binding site" evidence="1">
    <location>
        <position position="104"/>
    </location>
    <ligand>
        <name>Zn(2+)</name>
        <dbReference type="ChEBI" id="CHEBI:29105"/>
        <label>1</label>
    </ligand>
</feature>
<feature type="binding site" evidence="1">
    <location>
        <position position="111"/>
    </location>
    <ligand>
        <name>Zn(2+)</name>
        <dbReference type="ChEBI" id="CHEBI:29105"/>
        <label>1</label>
    </ligand>
</feature>
<feature type="binding site" evidence="1">
    <location>
        <position position="123"/>
    </location>
    <ligand>
        <name>Zn(2+)</name>
        <dbReference type="ChEBI" id="CHEBI:29105"/>
        <label>1</label>
    </ligand>
</feature>
<feature type="binding site" evidence="1">
    <location>
        <position position="127"/>
    </location>
    <ligand>
        <name>Zn(2+)</name>
        <dbReference type="ChEBI" id="CHEBI:29105"/>
        <label>1</label>
    </ligand>
</feature>
<feature type="binding site" evidence="1">
    <location>
        <position position="134"/>
    </location>
    <ligand>
        <name>Zn(2+)</name>
        <dbReference type="ChEBI" id="CHEBI:29105"/>
        <label>2</label>
    </ligand>
</feature>
<feature type="binding site" evidence="1">
    <location>
        <position position="141"/>
    </location>
    <ligand>
        <name>Zn(2+)</name>
        <dbReference type="ChEBI" id="CHEBI:29105"/>
        <label>2</label>
    </ligand>
</feature>
<feature type="binding site" evidence="1">
    <location>
        <position position="153"/>
    </location>
    <ligand>
        <name>Zn(2+)</name>
        <dbReference type="ChEBI" id="CHEBI:29105"/>
        <label>2</label>
    </ligand>
</feature>
<feature type="binding site" evidence="1">
    <location>
        <position position="158"/>
    </location>
    <ligand>
        <name>Zn(2+)</name>
        <dbReference type="ChEBI" id="CHEBI:29105"/>
        <label>2</label>
    </ligand>
</feature>
<feature type="splice variant" id="VSP_010169" description="In isoform 2." evidence="10 11">
    <location>
        <begin position="1"/>
        <end position="76"/>
    </location>
</feature>
<feature type="splice variant" id="VSP_010170" description="In isoform 2." evidence="10 11">
    <original>RCPTCRQELGDIRCL</original>
    <variation>MDILYVQPVNQECII</variation>
    <location>
        <begin position="77"/>
        <end position="91"/>
    </location>
</feature>
<feature type="mutagenesis site" description="Abolishes ubiquitination in vitro; acts as a dominant-negative mutant." evidence="5">
    <original>C</original>
    <variation>S</variation>
    <location>
        <position position="49"/>
    </location>
</feature>
<feature type="mutagenesis site" description="Abolishes ubiquitination in vitro." evidence="5">
    <original>H</original>
    <variation>Y</variation>
    <location>
        <position position="64"/>
    </location>
</feature>
<feature type="sequence conflict" description="In Ref. 1; AAM11573 and 5; AAO63927." evidence="13" ref="1 5">
    <original>R</original>
    <variation>K</variation>
    <location>
        <position position="268"/>
    </location>
</feature>
<protein>
    <recommendedName>
        <fullName evidence="13">E3 ubiquitin-protein ligase SINAT5</fullName>
        <ecNumber evidence="5">2.3.2.27</ecNumber>
    </recommendedName>
    <alternativeName>
        <fullName evidence="13">RING-type E3 ubiquitin transferase SINAT5</fullName>
    </alternativeName>
    <alternativeName>
        <fullName evidence="13">Seven in absentia homolog 5</fullName>
    </alternativeName>
</protein>
<comment type="function">
    <text evidence="5 9">E3 ubiquitin-protein ligase that mediates ubiquitination and subsequent proteasomal degradation of target proteins (PubMed:12226665). E3 ubiquitin ligases accept ubiquitin from an E2 ubiquitin-conjugating enzyme in the form of a thioester and then directly transfers the ubiquitin to targeted substrates (PubMed:12226665). Mediates the ubiquitination and proteasomal-dependent degradation of NAC021/NAC022, a transcription activator that functions downstream of the auxin signals, thereby acting as a down-regulator of auxin signals (PubMed:12226665). Involved in the formation of lateral roots (PubMed:12226665). Is antagonist to SINAT1, SINAT2, SINAT3 and SINAT4 by suppressing FREE1 ubiquitination and degradation mediated by SINAT1, SINAT2, SINAT3 and SINAT4, and promoting FREE1 accumulation (PubMed:32786047).</text>
</comment>
<comment type="catalytic activity">
    <reaction evidence="5">
        <text>S-ubiquitinyl-[E2 ubiquitin-conjugating enzyme]-L-cysteine + [acceptor protein]-L-lysine = [E2 ubiquitin-conjugating enzyme]-L-cysteine + N(6)-ubiquitinyl-[acceptor protein]-L-lysine.</text>
        <dbReference type="EC" id="2.3.2.27"/>
    </reaction>
</comment>
<comment type="pathway">
    <text evidence="13">Protein modification; protein ubiquitination.</text>
</comment>
<comment type="subunit">
    <text evidence="5 6 7 8 9">Homodimer; homodimerization is essential for its function. Interacts with UBC28 and NAC021/NAC022 (PubMed:12226665). Interacts with SINAT6 (PubMed:24350984). Interacts with ATG6 and TRAF1A (PubMed:28351989). Interacts with WAV3 (PubMed:22122664). Interacts with FREE1 (PubMed:32786047).</text>
</comment>
<comment type="subcellular location">
    <subcellularLocation>
        <location evidence="5">Nucleus</location>
    </subcellularLocation>
    <subcellularLocation>
        <location evidence="5">Cytoplasm</location>
    </subcellularLocation>
    <text evidence="5 9">Predominantly nuclear. Partially cytoplasmic. Multivesicular body (PubMed:32786047).</text>
</comment>
<comment type="alternative products">
    <event type="alternative splicing"/>
    <isoform>
        <id>Q8S3N1-1</id>
        <name>1</name>
        <sequence type="displayed"/>
    </isoform>
    <isoform>
        <id>Q8S3N1-2</id>
        <name>2</name>
        <sequence type="described" ref="VSP_010169 VSP_010170"/>
    </isoform>
</comment>
<comment type="tissue specificity">
    <text evidence="5">Expressed at low level in the vascular tissue of mature roots. Expressed in lateral roots and in elongation zone of the main root upon stimulation by auxin. Colocalizes with NAC021/NAC022.</text>
</comment>
<comment type="induction">
    <text evidence="5 7">By auxin (PubMed:12226665). Induced by salt stress (PubMed:24350984).</text>
</comment>
<comment type="domain">
    <text evidence="2">The RING-type zinc finger domain is essential for ubiquitin ligase activity.</text>
</comment>
<comment type="domain">
    <text evidence="2">The SBD domain (substrate-binding domain) mediates the homodimerization and the interaction with substrate proteins. It is related to the TRAF family.</text>
</comment>
<comment type="similarity">
    <text evidence="13">Belongs to the SINA (Seven in absentia) family.</text>
</comment>
<comment type="sequence caution" evidence="13">
    <conflict type="erroneous gene model prediction">
        <sequence resource="EMBL-CDS" id="BAB09798"/>
    </conflict>
</comment>
<dbReference type="EC" id="2.3.2.27" evidence="5"/>
<dbReference type="EMBL" id="AF480944">
    <property type="protein sequence ID" value="AAM11573.1"/>
    <property type="molecule type" value="mRNA"/>
</dbReference>
<dbReference type="EMBL" id="AB013388">
    <property type="protein sequence ID" value="BAB09798.1"/>
    <property type="status" value="ALT_SEQ"/>
    <property type="molecule type" value="Genomic_DNA"/>
</dbReference>
<dbReference type="EMBL" id="CP002688">
    <property type="protein sequence ID" value="AED96344.1"/>
    <property type="molecule type" value="Genomic_DNA"/>
</dbReference>
<dbReference type="EMBL" id="CP002688">
    <property type="protein sequence ID" value="ANM69124.1"/>
    <property type="molecule type" value="Genomic_DNA"/>
</dbReference>
<dbReference type="EMBL" id="AK117423">
    <property type="protein sequence ID" value="BAC42088.1"/>
    <property type="molecule type" value="mRNA"/>
</dbReference>
<dbReference type="EMBL" id="BT005507">
    <property type="protein sequence ID" value="AAO63927.1"/>
    <property type="molecule type" value="mRNA"/>
</dbReference>
<dbReference type="RefSeq" id="NP_001330825.1">
    <molecule id="Q8S3N1-2"/>
    <property type="nucleotide sequence ID" value="NM_001345051.1"/>
</dbReference>
<dbReference type="RefSeq" id="NP_200148.2">
    <molecule id="Q8S3N1-2"/>
    <property type="nucleotide sequence ID" value="NM_124715.4"/>
</dbReference>
<dbReference type="SMR" id="Q8S3N1"/>
<dbReference type="BioGRID" id="20662">
    <property type="interactions" value="6"/>
</dbReference>
<dbReference type="FunCoup" id="Q8S3N1">
    <property type="interactions" value="740"/>
</dbReference>
<dbReference type="IntAct" id="Q8S3N1">
    <property type="interactions" value="2"/>
</dbReference>
<dbReference type="STRING" id="3702.Q8S3N1"/>
<dbReference type="PaxDb" id="3702-AT5G53360.1"/>
<dbReference type="EnsemblPlants" id="AT5G53360.1">
    <molecule id="Q8S3N1-2"/>
    <property type="protein sequence ID" value="AT5G53360.1"/>
    <property type="gene ID" value="AT5G53360"/>
</dbReference>
<dbReference type="EnsemblPlants" id="AT5G53360.3">
    <molecule id="Q8S3N1-2"/>
    <property type="protein sequence ID" value="AT5G53360.3"/>
    <property type="gene ID" value="AT5G53360"/>
</dbReference>
<dbReference type="GeneID" id="835417"/>
<dbReference type="Gramene" id="AT5G53360.1">
    <molecule id="Q8S3N1-2"/>
    <property type="protein sequence ID" value="AT5G53360.1"/>
    <property type="gene ID" value="AT5G53360"/>
</dbReference>
<dbReference type="Gramene" id="AT5G53360.3">
    <molecule id="Q8S3N1-2"/>
    <property type="protein sequence ID" value="AT5G53360.3"/>
    <property type="gene ID" value="AT5G53360"/>
</dbReference>
<dbReference type="KEGG" id="ath:AT5G53360"/>
<dbReference type="Araport" id="AT5G53360"/>
<dbReference type="TAIR" id="AT5G53360">
    <property type="gene designation" value="SINAT5"/>
</dbReference>
<dbReference type="eggNOG" id="KOG3002">
    <property type="taxonomic scope" value="Eukaryota"/>
</dbReference>
<dbReference type="InParanoid" id="Q8S3N1"/>
<dbReference type="OMA" id="HEAQCAF"/>
<dbReference type="OrthoDB" id="941555at2759"/>
<dbReference type="PhylomeDB" id="Q8S3N1"/>
<dbReference type="UniPathway" id="UPA00143"/>
<dbReference type="PRO" id="PR:Q8S3N1"/>
<dbReference type="Proteomes" id="UP000006548">
    <property type="component" value="Chromosome 5"/>
</dbReference>
<dbReference type="ExpressionAtlas" id="Q8S3N1">
    <property type="expression patterns" value="baseline and differential"/>
</dbReference>
<dbReference type="GO" id="GO:0005737">
    <property type="term" value="C:cytoplasm"/>
    <property type="evidence" value="ECO:0007669"/>
    <property type="project" value="UniProtKB-SubCell"/>
</dbReference>
<dbReference type="GO" id="GO:0005634">
    <property type="term" value="C:nucleus"/>
    <property type="evidence" value="ECO:0007669"/>
    <property type="project" value="UniProtKB-SubCell"/>
</dbReference>
<dbReference type="GO" id="GO:0016740">
    <property type="term" value="F:transferase activity"/>
    <property type="evidence" value="ECO:0007669"/>
    <property type="project" value="UniProtKB-KW"/>
</dbReference>
<dbReference type="GO" id="GO:0008270">
    <property type="term" value="F:zinc ion binding"/>
    <property type="evidence" value="ECO:0007669"/>
    <property type="project" value="UniProtKB-KW"/>
</dbReference>
<dbReference type="GO" id="GO:0016567">
    <property type="term" value="P:protein ubiquitination"/>
    <property type="evidence" value="ECO:0000314"/>
    <property type="project" value="UniProtKB"/>
</dbReference>
<dbReference type="GO" id="GO:0006511">
    <property type="term" value="P:ubiquitin-dependent protein catabolic process"/>
    <property type="evidence" value="ECO:0007669"/>
    <property type="project" value="InterPro"/>
</dbReference>
<dbReference type="CDD" id="cd16571">
    <property type="entry name" value="RING-HC_SIAHs"/>
    <property type="match status" value="1"/>
</dbReference>
<dbReference type="CDD" id="cd03829">
    <property type="entry name" value="Sina"/>
    <property type="match status" value="1"/>
</dbReference>
<dbReference type="FunFam" id="3.30.40.10:FF:000041">
    <property type="entry name" value="E3 ubiquitin-protein ligase SINAT3"/>
    <property type="match status" value="1"/>
</dbReference>
<dbReference type="FunFam" id="3.30.40.10:FF:000483">
    <property type="entry name" value="E3 ubiquitin-protein ligase SINAT3"/>
    <property type="match status" value="1"/>
</dbReference>
<dbReference type="FunFam" id="2.60.210.10:FF:000004">
    <property type="entry name" value="E3 ubiquitin-protein ligase SINAT5-like"/>
    <property type="match status" value="1"/>
</dbReference>
<dbReference type="Gene3D" id="2.60.210.10">
    <property type="entry name" value="Apoptosis, Tumor Necrosis Factor Receptor Associated Protein 2, Chain A"/>
    <property type="match status" value="1"/>
</dbReference>
<dbReference type="Gene3D" id="3.30.40.10">
    <property type="entry name" value="Zinc/RING finger domain, C3HC4 (zinc finger)"/>
    <property type="match status" value="2"/>
</dbReference>
<dbReference type="InterPro" id="IPR018121">
    <property type="entry name" value="7-in-absentia-prot_TRAF-dom"/>
</dbReference>
<dbReference type="InterPro" id="IPR052088">
    <property type="entry name" value="E3_ubiquitin-ligase_SINA"/>
</dbReference>
<dbReference type="InterPro" id="IPR049548">
    <property type="entry name" value="Sina-like_RING"/>
</dbReference>
<dbReference type="InterPro" id="IPR008974">
    <property type="entry name" value="TRAF-like"/>
</dbReference>
<dbReference type="InterPro" id="IPR001841">
    <property type="entry name" value="Znf_RING"/>
</dbReference>
<dbReference type="InterPro" id="IPR013083">
    <property type="entry name" value="Znf_RING/FYVE/PHD"/>
</dbReference>
<dbReference type="InterPro" id="IPR013010">
    <property type="entry name" value="Znf_SIAH"/>
</dbReference>
<dbReference type="PANTHER" id="PTHR10315">
    <property type="entry name" value="E3 UBIQUITIN PROTEIN LIGASE SIAH"/>
    <property type="match status" value="1"/>
</dbReference>
<dbReference type="PANTHER" id="PTHR10315:SF158">
    <property type="entry name" value="E3 UBIQUITIN-PROTEIN LIGASE SINAT5"/>
    <property type="match status" value="1"/>
</dbReference>
<dbReference type="Pfam" id="PF21362">
    <property type="entry name" value="Sina_RING"/>
    <property type="match status" value="1"/>
</dbReference>
<dbReference type="Pfam" id="PF03145">
    <property type="entry name" value="Sina_TRAF"/>
    <property type="match status" value="1"/>
</dbReference>
<dbReference type="Pfam" id="PF21361">
    <property type="entry name" value="Sina_ZnF"/>
    <property type="match status" value="1"/>
</dbReference>
<dbReference type="SUPFAM" id="SSF57850">
    <property type="entry name" value="RING/U-box"/>
    <property type="match status" value="1"/>
</dbReference>
<dbReference type="SUPFAM" id="SSF49599">
    <property type="entry name" value="TRAF domain-like"/>
    <property type="match status" value="1"/>
</dbReference>
<dbReference type="PROSITE" id="PS50089">
    <property type="entry name" value="ZF_RING_2"/>
    <property type="match status" value="1"/>
</dbReference>
<dbReference type="PROSITE" id="PS51081">
    <property type="entry name" value="ZF_SIAH"/>
    <property type="match status" value="1"/>
</dbReference>
<reference key="1">
    <citation type="journal article" date="2002" name="Nature">
        <title>SINAT5 promotes ubiquitin-related degradation of NAC1 to attenuate auxin signals.</title>
        <authorList>
            <person name="Xie Q."/>
            <person name="Guo H.-S."/>
            <person name="Dallman G."/>
            <person name="Fang S."/>
            <person name="Weissman A.M."/>
            <person name="Chua N.-H."/>
        </authorList>
    </citation>
    <scope>NUCLEOTIDE SEQUENCE [MRNA] (ISOFORM 1)</scope>
    <scope>FUNCTION</scope>
    <scope>CATALYTIC ACTIVITY</scope>
    <scope>HOMODIMERIZATION</scope>
    <scope>INTERACTION WITH UBC28 AND NAC021/NAC022</scope>
    <scope>SUBCELLULAR LOCATION</scope>
    <scope>TISSUE SPECIFICITY</scope>
    <scope>INDUCTION</scope>
    <scope>MUTAGENESIS OF CYS-49 AND HIS-64</scope>
</reference>
<reference key="2">
    <citation type="journal article" date="1998" name="DNA Res.">
        <title>Structural analysis of Arabidopsis thaliana chromosome 5. VI. Sequence features of the regions of 1,367,185 bp covered by 19 physically assigned P1 and TAC clones.</title>
        <authorList>
            <person name="Kotani H."/>
            <person name="Nakamura Y."/>
            <person name="Sato S."/>
            <person name="Asamizu E."/>
            <person name="Kaneko T."/>
            <person name="Miyajima N."/>
            <person name="Tabata S."/>
        </authorList>
    </citation>
    <scope>NUCLEOTIDE SEQUENCE [LARGE SCALE GENOMIC DNA]</scope>
    <source>
        <strain>cv. Columbia</strain>
    </source>
</reference>
<reference key="3">
    <citation type="journal article" date="2017" name="Plant J.">
        <title>Araport11: a complete reannotation of the Arabidopsis thaliana reference genome.</title>
        <authorList>
            <person name="Cheng C.Y."/>
            <person name="Krishnakumar V."/>
            <person name="Chan A.P."/>
            <person name="Thibaud-Nissen F."/>
            <person name="Schobel S."/>
            <person name="Town C.D."/>
        </authorList>
    </citation>
    <scope>GENOME REANNOTATION</scope>
    <source>
        <strain>cv. Columbia</strain>
    </source>
</reference>
<reference key="4">
    <citation type="journal article" date="2002" name="Science">
        <title>Functional annotation of a full-length Arabidopsis cDNA collection.</title>
        <authorList>
            <person name="Seki M."/>
            <person name="Narusaka M."/>
            <person name="Kamiya A."/>
            <person name="Ishida J."/>
            <person name="Satou M."/>
            <person name="Sakurai T."/>
            <person name="Nakajima M."/>
            <person name="Enju A."/>
            <person name="Akiyama K."/>
            <person name="Oono Y."/>
            <person name="Muramatsu M."/>
            <person name="Hayashizaki Y."/>
            <person name="Kawai J."/>
            <person name="Carninci P."/>
            <person name="Itoh M."/>
            <person name="Ishii Y."/>
            <person name="Arakawa T."/>
            <person name="Shibata K."/>
            <person name="Shinagawa A."/>
            <person name="Shinozaki K."/>
        </authorList>
    </citation>
    <scope>NUCLEOTIDE SEQUENCE [LARGE SCALE MRNA] (ISOFORM 2)</scope>
    <source>
        <strain>cv. Columbia</strain>
    </source>
</reference>
<reference key="5">
    <citation type="journal article" date="2003" name="Science">
        <title>Empirical analysis of transcriptional activity in the Arabidopsis genome.</title>
        <authorList>
            <person name="Yamada K."/>
            <person name="Lim J."/>
            <person name="Dale J.M."/>
            <person name="Chen H."/>
            <person name="Shinn P."/>
            <person name="Palm C.J."/>
            <person name="Southwick A.M."/>
            <person name="Wu H.C."/>
            <person name="Kim C.J."/>
            <person name="Nguyen M."/>
            <person name="Pham P.K."/>
            <person name="Cheuk R.F."/>
            <person name="Karlin-Newmann G."/>
            <person name="Liu S.X."/>
            <person name="Lam B."/>
            <person name="Sakano H."/>
            <person name="Wu T."/>
            <person name="Yu G."/>
            <person name="Miranda M."/>
            <person name="Quach H.L."/>
            <person name="Tripp M."/>
            <person name="Chang C.H."/>
            <person name="Lee J.M."/>
            <person name="Toriumi M.J."/>
            <person name="Chan M.M."/>
            <person name="Tang C.C."/>
            <person name="Onodera C.S."/>
            <person name="Deng J.M."/>
            <person name="Akiyama K."/>
            <person name="Ansari Y."/>
            <person name="Arakawa T."/>
            <person name="Banh J."/>
            <person name="Banno F."/>
            <person name="Bowser L."/>
            <person name="Brooks S.Y."/>
            <person name="Carninci P."/>
            <person name="Chao Q."/>
            <person name="Choy N."/>
            <person name="Enju A."/>
            <person name="Goldsmith A.D."/>
            <person name="Gurjal M."/>
            <person name="Hansen N.F."/>
            <person name="Hayashizaki Y."/>
            <person name="Johnson-Hopson C."/>
            <person name="Hsuan V.W."/>
            <person name="Iida K."/>
            <person name="Karnes M."/>
            <person name="Khan S."/>
            <person name="Koesema E."/>
            <person name="Ishida J."/>
            <person name="Jiang P.X."/>
            <person name="Jones T."/>
            <person name="Kawai J."/>
            <person name="Kamiya A."/>
            <person name="Meyers C."/>
            <person name="Nakajima M."/>
            <person name="Narusaka M."/>
            <person name="Seki M."/>
            <person name="Sakurai T."/>
            <person name="Satou M."/>
            <person name="Tamse R."/>
            <person name="Vaysberg M."/>
            <person name="Wallender E.K."/>
            <person name="Wong C."/>
            <person name="Yamamura Y."/>
            <person name="Yuan S."/>
            <person name="Shinozaki K."/>
            <person name="Davis R.W."/>
            <person name="Theologis A."/>
            <person name="Ecker J.R."/>
        </authorList>
    </citation>
    <scope>NUCLEOTIDE SEQUENCE [LARGE SCALE MRNA] (ISOFORM 2)</scope>
    <source>
        <strain>cv. Columbia</strain>
    </source>
</reference>
<reference key="6">
    <citation type="journal article" date="2012" name="Plant J.">
        <title>The wavy growth 3 E3 ligase family controls the gravitropic response in Arabidopsis roots.</title>
        <authorList>
            <person name="Sakai T."/>
            <person name="Mochizuki S."/>
            <person name="Haga K."/>
            <person name="Uehara Y."/>
            <person name="Suzuki A."/>
            <person name="Harada A."/>
            <person name="Wada T."/>
            <person name="Ishiguro S."/>
            <person name="Okada K."/>
        </authorList>
    </citation>
    <scope>INTERACTION WITH WAV3</scope>
    <source>
        <strain>cv. Landsberg erecta</strain>
    </source>
</reference>
<reference key="7">
    <citation type="journal article" date="2014" name="New Phytol.">
        <title>The tumor necrosis factor receptor-associated factor (TRAF)-like family protein SEVEN IN ABSENTIA 2 (SINA2) promotes drought tolerance in an ABA-dependent manner in Arabidopsis.</title>
        <authorList>
            <person name="Bao Y."/>
            <person name="Wang C."/>
            <person name="Jiang C."/>
            <person name="Pan J."/>
            <person name="Zhang G."/>
            <person name="Liu H."/>
            <person name="Zhang H."/>
        </authorList>
    </citation>
    <scope>INTERACTION WITH SINAT6</scope>
    <scope>INDUCTION</scope>
</reference>
<reference key="8">
    <citation type="journal article" date="2017" name="Plant Cell">
        <title>TRAF family proteins regulate autophagy dynamics by modulating AUTOPHAGY PROTEIN6 stability in Arabidopsis.</title>
        <authorList>
            <person name="Qi H."/>
            <person name="Xia F.N."/>
            <person name="Xie L.J."/>
            <person name="Yu L.J."/>
            <person name="Chen Q.F."/>
            <person name="Zhuang X.H."/>
            <person name="Wang Q."/>
            <person name="Li F."/>
            <person name="Jiang L."/>
            <person name="Xie Q."/>
            <person name="Xiao S."/>
        </authorList>
    </citation>
    <scope>INTERACTION WITH ATG6 AND TRAF1A</scope>
</reference>
<reference key="9">
    <citation type="journal article" date="2020" name="J. Integr. Plant Biol.">
        <title>SINAT E3 ligases regulate the stability of the ESCRT component FREE1 in response to iron deficiency in plants.</title>
        <authorList>
            <person name="Xiao Z."/>
            <person name="Yang C."/>
            <person name="Liu C."/>
            <person name="Yang L."/>
            <person name="Yang S."/>
            <person name="Zhou J."/>
            <person name="Li F."/>
            <person name="Jiang L."/>
            <person name="Xiao S."/>
            <person name="Gao C."/>
            <person name="Shen W."/>
        </authorList>
    </citation>
    <scope>FUNCTION</scope>
    <scope>INTERACTION WITH FREE1</scope>
    <scope>SUBCELLULAR LOCATION</scope>
</reference>
<gene>
    <name evidence="12" type="primary">SINAT5</name>
    <name type="ordered locus">At5g53360</name>
    <name type="ORF">K19E1.16</name>
</gene>
<sequence length="309" mass="35037">METDSIDSVIDDDEIHQKHQFSSTKSQGGATVVISPATSVYELLECPVCTNSMYPPIHQCHNGHTLCSTCKSRVHNRCPTCRQELGDIRCLALEKVAESLELPCKYYNLGCLGIFPYYSKLKHESQCNFRPYSCPYAGSECAAVGDITFLVAHLRDDHKVDMHTGCTFNHRYVKSNPREVENATWMLTVFQCFGQYFCLHFEAFQLGMAPVYMAFLRFMGDEDDARNYTYSLEVGGSGRKQTWEGTPRSVRDSHRKVRDSHDGLIIQRNMALFFSGGDKKELKLRVTGRIWKEQQNPDSGVCITSMCSS</sequence>